<sequence>MTKDVVVEHGESSKAPLVAAPAASGVGRAASVADVFLRFLAIVGTIASAISMGTTNETLPFFTQFIQFEAKYSDLPSFTFFVAANAVVCTYLVLSIPLSIVHIVRPRARYSRLVLVFFDAAMLTLLTAGASAAAAIVYLAHKGNVRANWFAICQQFDSFCERISGSLIGSFAAMVLLIMLIFLSAFALARRH</sequence>
<comment type="function">
    <text evidence="1">Regulates membrane-cell wall junctions and localized cell wall deposition. Required for establishment of the Casparian strip membrane domain (CSD) and the subsequent formation of Casparian strips, a cell wall modification of the root endodermis that determines an apoplastic barrier between the intraorganismal apoplasm and the extraorganismal apoplasm and prevents lateral diffusion (By similarity).</text>
</comment>
<comment type="subunit">
    <text evidence="1">Homodimer and heterodimers.</text>
</comment>
<comment type="subcellular location">
    <subcellularLocation>
        <location evidence="1">Cell membrane</location>
        <topology evidence="1">Multi-pass membrane protein</topology>
    </subcellularLocation>
    <text evidence="1">Very restricted localization following a belt shape within the plasma membrane which coincides with the position of the Casparian strip membrane domain in the root endodermis.</text>
</comment>
<comment type="similarity">
    <text evidence="3">Belongs to the Casparian strip membrane proteins (CASP) family.</text>
</comment>
<evidence type="ECO:0000250" key="1"/>
<evidence type="ECO:0000255" key="2"/>
<evidence type="ECO:0000305" key="3"/>
<feature type="chain" id="PRO_0000417793" description="Casparian strip membrane protein 2">
    <location>
        <begin position="1"/>
        <end position="192"/>
    </location>
</feature>
<feature type="topological domain" description="Cytoplasmic" evidence="2">
    <location>
        <begin position="1"/>
        <end position="31"/>
    </location>
</feature>
<feature type="transmembrane region" description="Helical" evidence="2">
    <location>
        <begin position="32"/>
        <end position="52"/>
    </location>
</feature>
<feature type="topological domain" description="Extracellular" evidence="2">
    <location>
        <begin position="53"/>
        <end position="79"/>
    </location>
</feature>
<feature type="transmembrane region" description="Helical" evidence="2">
    <location>
        <begin position="80"/>
        <end position="100"/>
    </location>
</feature>
<feature type="topological domain" description="Cytoplasmic" evidence="2">
    <location>
        <begin position="101"/>
        <end position="112"/>
    </location>
</feature>
<feature type="transmembrane region" description="Helical" evidence="2">
    <location>
        <begin position="113"/>
        <end position="133"/>
    </location>
</feature>
<feature type="topological domain" description="Extracellular" evidence="2">
    <location>
        <begin position="134"/>
        <end position="166"/>
    </location>
</feature>
<feature type="transmembrane region" description="Helical" evidence="2">
    <location>
        <begin position="167"/>
        <end position="187"/>
    </location>
</feature>
<feature type="topological domain" description="Cytoplasmic" evidence="2">
    <location>
        <begin position="188"/>
        <end position="192"/>
    </location>
</feature>
<feature type="glycosylation site" description="N-linked (GlcNAc...) asparagine" evidence="2">
    <location>
        <position position="56"/>
    </location>
</feature>
<reference key="1">
    <citation type="submission" date="2008-09" db="EMBL/GenBank/DDBJ databases">
        <title>DOE Joint Genome Institute Panicum virgatum EST project.</title>
        <authorList>
            <person name="Lucas S."/>
            <person name="Rokhsar D."/>
            <person name="Wang M."/>
            <person name="Lindquist E.A."/>
            <person name="Tobias C.M."/>
            <person name="Twigg P."/>
            <person name="Sarath G."/>
            <person name="Anderson O."/>
            <person name="Vogel K."/>
        </authorList>
    </citation>
    <scope>NUCLEOTIDE SEQUENCE [LARGE SCALE MRNA]</scope>
    <source>
        <tissue>Etiolated seedling</tissue>
    </source>
</reference>
<reference key="2">
    <citation type="journal article" date="2014" name="Plant Physiol.">
        <title>Functional and evolutionary analysis of the CASPARIAN STRIP MEMBRANE DOMAIN PROTEIN family.</title>
        <authorList>
            <person name="Roppolo D."/>
            <person name="Boeckmann B."/>
            <person name="Pfister A."/>
            <person name="Boutet E."/>
            <person name="Rubio M.C."/>
            <person name="Denervaud-Tendon V."/>
            <person name="Vermeer J.E."/>
            <person name="Gheyselinck J."/>
            <person name="Xenarios I."/>
            <person name="Geldner N."/>
        </authorList>
    </citation>
    <scope>GENE FAMILY</scope>
    <scope>NOMENCLATURE</scope>
</reference>
<organism>
    <name type="scientific">Panicum virgatum</name>
    <name type="common">Blackwell switchgrass</name>
    <dbReference type="NCBI Taxonomy" id="38727"/>
    <lineage>
        <taxon>Eukaryota</taxon>
        <taxon>Viridiplantae</taxon>
        <taxon>Streptophyta</taxon>
        <taxon>Embryophyta</taxon>
        <taxon>Tracheophyta</taxon>
        <taxon>Spermatophyta</taxon>
        <taxon>Magnoliopsida</taxon>
        <taxon>Liliopsida</taxon>
        <taxon>Poales</taxon>
        <taxon>Poaceae</taxon>
        <taxon>PACMAD clade</taxon>
        <taxon>Panicoideae</taxon>
        <taxon>Panicodae</taxon>
        <taxon>Paniceae</taxon>
        <taxon>Panicinae</taxon>
        <taxon>Panicum</taxon>
        <taxon>Panicum sect. Hiantes</taxon>
    </lineage>
</organism>
<proteinExistence type="evidence at transcript level"/>
<keyword id="KW-1003">Cell membrane</keyword>
<keyword id="KW-0961">Cell wall biogenesis/degradation</keyword>
<keyword id="KW-0325">Glycoprotein</keyword>
<keyword id="KW-0472">Membrane</keyword>
<keyword id="KW-0812">Transmembrane</keyword>
<keyword id="KW-1133">Transmembrane helix</keyword>
<accession>P0DI34</accession>
<protein>
    <recommendedName>
        <fullName>Casparian strip membrane protein 2</fullName>
        <shortName>PvCASP2</shortName>
    </recommendedName>
</protein>
<name>CASP2_PANVG</name>
<dbReference type="EMBL" id="FL891603">
    <property type="status" value="NOT_ANNOTATED_CDS"/>
    <property type="molecule type" value="mRNA"/>
</dbReference>
<dbReference type="RefSeq" id="XP_039774694.1">
    <property type="nucleotide sequence ID" value="XM_039918760.1"/>
</dbReference>
<dbReference type="SMR" id="P0DI34"/>
<dbReference type="GeneID" id="120642301"/>
<dbReference type="OrthoDB" id="753675at2759"/>
<dbReference type="GO" id="GO:0005886">
    <property type="term" value="C:plasma membrane"/>
    <property type="evidence" value="ECO:0007669"/>
    <property type="project" value="UniProtKB-SubCell"/>
</dbReference>
<dbReference type="GO" id="GO:0071555">
    <property type="term" value="P:cell wall organization"/>
    <property type="evidence" value="ECO:0007669"/>
    <property type="project" value="UniProtKB-KW"/>
</dbReference>
<dbReference type="InterPro" id="IPR006459">
    <property type="entry name" value="CASP/CASPL"/>
</dbReference>
<dbReference type="InterPro" id="IPR006702">
    <property type="entry name" value="CASP_dom"/>
</dbReference>
<dbReference type="InterPro" id="IPR044173">
    <property type="entry name" value="CASPL"/>
</dbReference>
<dbReference type="NCBIfam" id="TIGR01569">
    <property type="entry name" value="A_tha_TIGR01569"/>
    <property type="match status" value="1"/>
</dbReference>
<dbReference type="PANTHER" id="PTHR36488:SF12">
    <property type="entry name" value="CASP-LIKE PROTEIN"/>
    <property type="match status" value="1"/>
</dbReference>
<dbReference type="PANTHER" id="PTHR36488">
    <property type="entry name" value="CASP-LIKE PROTEIN 1U1"/>
    <property type="match status" value="1"/>
</dbReference>
<dbReference type="Pfam" id="PF04535">
    <property type="entry name" value="CASP_dom"/>
    <property type="match status" value="1"/>
</dbReference>